<organism>
    <name type="scientific">Burkholderia pseudomallei (strain 1710b)</name>
    <dbReference type="NCBI Taxonomy" id="320372"/>
    <lineage>
        <taxon>Bacteria</taxon>
        <taxon>Pseudomonadati</taxon>
        <taxon>Pseudomonadota</taxon>
        <taxon>Betaproteobacteria</taxon>
        <taxon>Burkholderiales</taxon>
        <taxon>Burkholderiaceae</taxon>
        <taxon>Burkholderia</taxon>
        <taxon>pseudomallei group</taxon>
    </lineage>
</organism>
<keyword id="KW-0963">Cytoplasm</keyword>
<keyword id="KW-0312">Gluconeogenesis</keyword>
<keyword id="KW-0324">Glycolysis</keyword>
<keyword id="KW-0413">Isomerase</keyword>
<feature type="chain" id="PRO_0000230913" description="Glucose-6-phosphate isomerase">
    <location>
        <begin position="1"/>
        <end position="540"/>
    </location>
</feature>
<feature type="active site" description="Proton donor" evidence="1">
    <location>
        <position position="350"/>
    </location>
</feature>
<feature type="active site" evidence="1">
    <location>
        <position position="381"/>
    </location>
</feature>
<feature type="active site" evidence="1">
    <location>
        <position position="503"/>
    </location>
</feature>
<gene>
    <name evidence="1" type="primary">pgi</name>
    <name type="ordered locus">BURPS1710b_2466</name>
</gene>
<proteinExistence type="inferred from homology"/>
<comment type="function">
    <text evidence="1">Catalyzes the reversible isomerization of glucose-6-phosphate to fructose-6-phosphate.</text>
</comment>
<comment type="catalytic activity">
    <reaction evidence="1">
        <text>alpha-D-glucose 6-phosphate = beta-D-fructose 6-phosphate</text>
        <dbReference type="Rhea" id="RHEA:11816"/>
        <dbReference type="ChEBI" id="CHEBI:57634"/>
        <dbReference type="ChEBI" id="CHEBI:58225"/>
        <dbReference type="EC" id="5.3.1.9"/>
    </reaction>
</comment>
<comment type="pathway">
    <text evidence="1">Carbohydrate biosynthesis; gluconeogenesis.</text>
</comment>
<comment type="pathway">
    <text evidence="1">Carbohydrate degradation; glycolysis; D-glyceraldehyde 3-phosphate and glycerone phosphate from D-glucose: step 2/4.</text>
</comment>
<comment type="subcellular location">
    <subcellularLocation>
        <location evidence="1">Cytoplasm</location>
    </subcellularLocation>
</comment>
<comment type="similarity">
    <text evidence="1">Belongs to the GPI family.</text>
</comment>
<protein>
    <recommendedName>
        <fullName evidence="1">Glucose-6-phosphate isomerase</fullName>
        <shortName evidence="1">GPI</shortName>
        <ecNumber evidence="1">5.3.1.9</ecNumber>
    </recommendedName>
    <alternativeName>
        <fullName evidence="1">Phosphoglucose isomerase</fullName>
        <shortName evidence="1">PGI</shortName>
    </alternativeName>
    <alternativeName>
        <fullName evidence="1">Phosphohexose isomerase</fullName>
        <shortName evidence="1">PHI</shortName>
    </alternativeName>
</protein>
<evidence type="ECO:0000255" key="1">
    <source>
        <dbReference type="HAMAP-Rule" id="MF_00473"/>
    </source>
</evidence>
<reference key="1">
    <citation type="journal article" date="2010" name="Genome Biol. Evol.">
        <title>Continuing evolution of Burkholderia mallei through genome reduction and large-scale rearrangements.</title>
        <authorList>
            <person name="Losada L."/>
            <person name="Ronning C.M."/>
            <person name="DeShazer D."/>
            <person name="Woods D."/>
            <person name="Fedorova N."/>
            <person name="Kim H.S."/>
            <person name="Shabalina S.A."/>
            <person name="Pearson T.R."/>
            <person name="Brinkac L."/>
            <person name="Tan P."/>
            <person name="Nandi T."/>
            <person name="Crabtree J."/>
            <person name="Badger J."/>
            <person name="Beckstrom-Sternberg S."/>
            <person name="Saqib M."/>
            <person name="Schutzer S.E."/>
            <person name="Keim P."/>
            <person name="Nierman W.C."/>
        </authorList>
    </citation>
    <scope>NUCLEOTIDE SEQUENCE [LARGE SCALE GENOMIC DNA]</scope>
    <source>
        <strain>1710b</strain>
    </source>
</reference>
<accession>Q3JRE2</accession>
<sequence>MTLNSLPVWPALQAHYEEIRDAHLRDWFAPANDRAPTRAERFTFEGGGLAADFSKNRLTDATLALLVRLAREAGVEARRDAMFAGETVNPTEGRAALHTALRANAPDAPFQAQVAAERAKMARFADAVRSGAWTGYTGKRIRHVVNIGIGGSDLGPKMVVHALHHVATPDIATHFVSNVDGADLARVLERIDPEATLAIIVSKTFTTLETMTNARSLRDWFVANGCPEGALAKHFVGVSANPAEVVKFGIAEANVFEMWDWVGGRYSLWSAVGLSIMIAIGPERFDELLAGARDMDEHFRTAPLERNLPVLQGLVGIWYRNFFGAQSYLVAPYSEALHYLPSYLQQLEMESNGKSARIDGAFVDYPTSAVTWGEPGTNGQHAFFQMLHQGPTLVPIDFIAVLTPEHPLASHHPKLLANCFAQSEALMLGRTLDEARKIVGPAKPELAPHLTFPGNRPTTTLLVDALTPRTLGALIALYEHKVLVQAAVWNINPFDQWGVELGKILGKVVEADLTAAQVDPAKHDSSTSALIARARKALGE</sequence>
<name>G6PI_BURP1</name>
<dbReference type="EC" id="5.3.1.9" evidence="1"/>
<dbReference type="EMBL" id="CP000124">
    <property type="protein sequence ID" value="ABA48552.1"/>
    <property type="molecule type" value="Genomic_DNA"/>
</dbReference>
<dbReference type="RefSeq" id="WP_004527211.1">
    <property type="nucleotide sequence ID" value="NC_007434.1"/>
</dbReference>
<dbReference type="SMR" id="Q3JRE2"/>
<dbReference type="EnsemblBacteria" id="ABA48552">
    <property type="protein sequence ID" value="ABA48552"/>
    <property type="gene ID" value="BURPS1710b_2466"/>
</dbReference>
<dbReference type="KEGG" id="bpm:BURPS1710b_2466"/>
<dbReference type="HOGENOM" id="CLU_017947_3_1_4"/>
<dbReference type="UniPathway" id="UPA00109">
    <property type="reaction ID" value="UER00181"/>
</dbReference>
<dbReference type="UniPathway" id="UPA00138"/>
<dbReference type="Proteomes" id="UP000002700">
    <property type="component" value="Chromosome I"/>
</dbReference>
<dbReference type="GO" id="GO:0005829">
    <property type="term" value="C:cytosol"/>
    <property type="evidence" value="ECO:0007669"/>
    <property type="project" value="TreeGrafter"/>
</dbReference>
<dbReference type="GO" id="GO:0097367">
    <property type="term" value="F:carbohydrate derivative binding"/>
    <property type="evidence" value="ECO:0007669"/>
    <property type="project" value="InterPro"/>
</dbReference>
<dbReference type="GO" id="GO:0004347">
    <property type="term" value="F:glucose-6-phosphate isomerase activity"/>
    <property type="evidence" value="ECO:0007669"/>
    <property type="project" value="UniProtKB-UniRule"/>
</dbReference>
<dbReference type="GO" id="GO:0048029">
    <property type="term" value="F:monosaccharide binding"/>
    <property type="evidence" value="ECO:0007669"/>
    <property type="project" value="TreeGrafter"/>
</dbReference>
<dbReference type="GO" id="GO:0006094">
    <property type="term" value="P:gluconeogenesis"/>
    <property type="evidence" value="ECO:0007669"/>
    <property type="project" value="UniProtKB-UniRule"/>
</dbReference>
<dbReference type="GO" id="GO:0051156">
    <property type="term" value="P:glucose 6-phosphate metabolic process"/>
    <property type="evidence" value="ECO:0007669"/>
    <property type="project" value="TreeGrafter"/>
</dbReference>
<dbReference type="GO" id="GO:0006096">
    <property type="term" value="P:glycolytic process"/>
    <property type="evidence" value="ECO:0007669"/>
    <property type="project" value="UniProtKB-UniRule"/>
</dbReference>
<dbReference type="CDD" id="cd05015">
    <property type="entry name" value="SIS_PGI_1"/>
    <property type="match status" value="1"/>
</dbReference>
<dbReference type="CDD" id="cd05016">
    <property type="entry name" value="SIS_PGI_2"/>
    <property type="match status" value="1"/>
</dbReference>
<dbReference type="Gene3D" id="1.10.1390.10">
    <property type="match status" value="1"/>
</dbReference>
<dbReference type="Gene3D" id="3.40.50.10490">
    <property type="entry name" value="Glucose-6-phosphate isomerase like protein, domain 1"/>
    <property type="match status" value="2"/>
</dbReference>
<dbReference type="HAMAP" id="MF_00473">
    <property type="entry name" value="G6P_isomerase"/>
    <property type="match status" value="1"/>
</dbReference>
<dbReference type="InterPro" id="IPR001672">
    <property type="entry name" value="G6P_Isomerase"/>
</dbReference>
<dbReference type="InterPro" id="IPR023096">
    <property type="entry name" value="G6P_Isomerase_C"/>
</dbReference>
<dbReference type="InterPro" id="IPR018189">
    <property type="entry name" value="Phosphoglucose_isomerase_CS"/>
</dbReference>
<dbReference type="InterPro" id="IPR046348">
    <property type="entry name" value="SIS_dom_sf"/>
</dbReference>
<dbReference type="InterPro" id="IPR035476">
    <property type="entry name" value="SIS_PGI_1"/>
</dbReference>
<dbReference type="InterPro" id="IPR035482">
    <property type="entry name" value="SIS_PGI_2"/>
</dbReference>
<dbReference type="NCBIfam" id="NF001211">
    <property type="entry name" value="PRK00179.1"/>
    <property type="match status" value="1"/>
</dbReference>
<dbReference type="PANTHER" id="PTHR11469">
    <property type="entry name" value="GLUCOSE-6-PHOSPHATE ISOMERASE"/>
    <property type="match status" value="1"/>
</dbReference>
<dbReference type="PANTHER" id="PTHR11469:SF1">
    <property type="entry name" value="GLUCOSE-6-PHOSPHATE ISOMERASE"/>
    <property type="match status" value="1"/>
</dbReference>
<dbReference type="Pfam" id="PF00342">
    <property type="entry name" value="PGI"/>
    <property type="match status" value="1"/>
</dbReference>
<dbReference type="PRINTS" id="PR00662">
    <property type="entry name" value="G6PISOMERASE"/>
</dbReference>
<dbReference type="SUPFAM" id="SSF53697">
    <property type="entry name" value="SIS domain"/>
    <property type="match status" value="1"/>
</dbReference>
<dbReference type="PROSITE" id="PS00765">
    <property type="entry name" value="P_GLUCOSE_ISOMERASE_1"/>
    <property type="match status" value="1"/>
</dbReference>
<dbReference type="PROSITE" id="PS00174">
    <property type="entry name" value="P_GLUCOSE_ISOMERASE_2"/>
    <property type="match status" value="1"/>
</dbReference>
<dbReference type="PROSITE" id="PS51463">
    <property type="entry name" value="P_GLUCOSE_ISOMERASE_3"/>
    <property type="match status" value="1"/>
</dbReference>